<gene>
    <name evidence="4" type="primary">nodB</name>
</gene>
<accession>A0A2I6PJ07</accession>
<feature type="chain" id="PRO_0000446543" description="Terpene cyclase nodB">
    <location>
        <begin position="1"/>
        <end position="243"/>
    </location>
</feature>
<feature type="transmembrane region" description="Helical" evidence="1">
    <location>
        <begin position="19"/>
        <end position="39"/>
    </location>
</feature>
<feature type="transmembrane region" description="Helical" evidence="1">
    <location>
        <begin position="50"/>
        <end position="70"/>
    </location>
</feature>
<feature type="transmembrane region" description="Helical" evidence="1">
    <location>
        <begin position="75"/>
        <end position="95"/>
    </location>
</feature>
<feature type="transmembrane region" description="Helical" evidence="1">
    <location>
        <begin position="112"/>
        <end position="132"/>
    </location>
</feature>
<feature type="transmembrane region" description="Helical" evidence="1">
    <location>
        <begin position="134"/>
        <end position="154"/>
    </location>
</feature>
<feature type="transmembrane region" description="Helical" evidence="1">
    <location>
        <begin position="169"/>
        <end position="189"/>
    </location>
</feature>
<feature type="transmembrane region" description="Helical" evidence="1">
    <location>
        <begin position="205"/>
        <end position="225"/>
    </location>
</feature>
<feature type="glycosylation site" description="N-linked (GlcNAc...) asparagine" evidence="2">
    <location>
        <position position="111"/>
    </location>
</feature>
<dbReference type="EC" id="4.2.3.-" evidence="6"/>
<dbReference type="EMBL" id="MG182145">
    <property type="protein sequence ID" value="AUM60064.1"/>
    <property type="molecule type" value="Genomic_DNA"/>
</dbReference>
<dbReference type="GlyCosmos" id="A0A2I6PJ07">
    <property type="glycosylation" value="1 site, No reported glycans"/>
</dbReference>
<dbReference type="GO" id="GO:0016020">
    <property type="term" value="C:membrane"/>
    <property type="evidence" value="ECO:0007669"/>
    <property type="project" value="UniProtKB-SubCell"/>
</dbReference>
<dbReference type="GO" id="GO:0016829">
    <property type="term" value="F:lyase activity"/>
    <property type="evidence" value="ECO:0007669"/>
    <property type="project" value="UniProtKB-KW"/>
</dbReference>
<dbReference type="InterPro" id="IPR039020">
    <property type="entry name" value="PaxB-like"/>
</dbReference>
<dbReference type="PANTHER" id="PTHR42038">
    <property type="match status" value="1"/>
</dbReference>
<dbReference type="PANTHER" id="PTHR42038:SF2">
    <property type="entry name" value="TERPENE CYCLASE AUSL"/>
    <property type="match status" value="1"/>
</dbReference>
<dbReference type="Pfam" id="PF25129">
    <property type="entry name" value="Pyr4-TMTC"/>
    <property type="match status" value="1"/>
</dbReference>
<organism>
    <name type="scientific">Hypoxylon pulicicidum</name>
    <dbReference type="NCBI Taxonomy" id="1243767"/>
    <lineage>
        <taxon>Eukaryota</taxon>
        <taxon>Fungi</taxon>
        <taxon>Dikarya</taxon>
        <taxon>Ascomycota</taxon>
        <taxon>Pezizomycotina</taxon>
        <taxon>Sordariomycetes</taxon>
        <taxon>Xylariomycetidae</taxon>
        <taxon>Xylariales</taxon>
        <taxon>Hypoxylaceae</taxon>
        <taxon>Hypoxylon</taxon>
    </lineage>
</organism>
<name>NODB_HYPPI</name>
<comment type="function">
    <text evidence="3 6">Terpene cyclase; part of the gene cluster that mediates the biosynthesis of the indole diterpenes nodulisporic acids (NA). Nodulisporic acid A (NAA) and its chemically modified derivatives are of particular significance because of their highly potent insecticidal activity against blood-feeding arthropods and lack of observable adverse effects on mammals, in particular the tremogenicity associated with the paspaline-derived IDTs is not observed (PubMed:29283570). The geranylgeranyl diphosphate (GGPP) synthase ggs1, localized outside of the cluster, is proposed to catalyze the first step in nodulisporic acid biosynthesis via conversion of farnesyl pyrophosphate and isopentyl pyrophosphate into geranylgeranyl pyrophosphate (GGPP) (PubMed:29283570). Condensation of indole-3-glycerol phosphate with GGPP by the prenyl transferase nodC then forms 3-geranylgeranylindole (3-GGI) (PubMed:29283570). Epoxidation by the FAD-dependent monooxygenase nodM leads to a single-epoxidized-GGI that is substrate of the terpene cyclase nodB for cyclization to yield emindole SB (PubMed:29283570). The terminal methyl carbon, C28, of emindole SB is then oxidized by the cytochrome P450 monooxygenase nodW to produce nodulisporic acid F (NAF), the pentacyclic core of NAA (PubMed:29283570). NAF is converted to nodulisporic acid E (NAE) via prenylation. This step is probably performed by one of the indole diterpene prenyltransferases nodD1 or nodD2 (Probable). Several oxidation steps performed by the FAD-linked oxidoreductase nodO and one of the cytochrome P450 monooxygenase nodR, nodX or nodZ further convert NAE to nodulisporic acid D (NAD) (Probable). NAD is substrate of cytochrome P450 monooxygenase nodJ to produce the precursor of nodulisporic acid C (NAC), converted to NAC by one of the indole diterpene prenyltransferases nodD1 or nodD2 (Probable). The FAD-dependent monooxygenase nodY2 then oxidizes NAC to nodulisporic acid B (NAB) (Probable). Finally NAB is converted to NAA by one of the cytochrome P450 monooxygenases nodR, nodX or nodZ (Probable).</text>
</comment>
<comment type="pathway">
    <text evidence="3">Secondary metabolite biosynthesis.</text>
</comment>
<comment type="subcellular location">
    <subcellularLocation>
        <location evidence="1">Membrane</location>
        <topology evidence="1">Multi-pass membrane protein</topology>
    </subcellularLocation>
</comment>
<comment type="similarity">
    <text evidence="5">Belongs to the paxB family.</text>
</comment>
<proteinExistence type="inferred from homology"/>
<reference key="1">
    <citation type="journal article" date="2018" name="J. Am. Chem. Soc.">
        <title>Heterologous biosynthesis of nodulisporic acid F.</title>
        <authorList>
            <person name="Van de Bittner K.C."/>
            <person name="Nicholson M.J."/>
            <person name="Bustamante L.Y."/>
            <person name="Kessans S.A."/>
            <person name="Ram A."/>
            <person name="van Dolleweerd C.J."/>
            <person name="Scott B."/>
            <person name="Parker E.J."/>
        </authorList>
    </citation>
    <scope>NUCLEOTIDE SEQUENCE [GENOMIC DNA]</scope>
    <scope>IDENTIFICATION</scope>
    <scope>FUNCTION</scope>
    <scope>PATHWAY</scope>
    <source>
        <strain>MF5954 / ATCC 74245</strain>
    </source>
</reference>
<keyword id="KW-0325">Glycoprotein</keyword>
<keyword id="KW-0456">Lyase</keyword>
<keyword id="KW-0472">Membrane</keyword>
<keyword id="KW-0812">Transmembrane</keyword>
<keyword id="KW-1133">Transmembrane helix</keyword>
<sequence length="243" mass="26951">MDGFDRSNAPVEYQRVEWISDIFVFGMGVCWLINYAGMIYTSLQEQTYSMAPLALCCNFAWEMVYGLIYPSKSRIEQGVFLAGLVVNLGVMYTAIRFAPNEWAHAPLVMNNITLIFALGVLGSLTGHLALAAEIGPALGYSWGAVACQLLLSVGGFCQLLGRSSSRGASYTLWLSRFIGSGCVVGFAILRYMYWSEAFNWLNSPLVLWSLGVFIAVDSLYGICLWNVKKYEHGQERSNARKAQ</sequence>
<protein>
    <recommendedName>
        <fullName evidence="4">Terpene cyclase nodB</fullName>
        <ecNumber evidence="6">4.2.3.-</ecNumber>
    </recommendedName>
    <alternativeName>
        <fullName evidence="4">Nodulisporic acid biosynthesis cluster protein B</fullName>
    </alternativeName>
</protein>
<evidence type="ECO:0000255" key="1"/>
<evidence type="ECO:0000255" key="2">
    <source>
        <dbReference type="PROSITE-ProRule" id="PRU00498"/>
    </source>
</evidence>
<evidence type="ECO:0000269" key="3">
    <source>
    </source>
</evidence>
<evidence type="ECO:0000303" key="4">
    <source>
    </source>
</evidence>
<evidence type="ECO:0000305" key="5"/>
<evidence type="ECO:0000305" key="6">
    <source>
    </source>
</evidence>